<accession>P08132</accession>
<accession>Q29306</accession>
<name>ANXA4_PIG</name>
<feature type="initiator methionine" description="Removed" evidence="5">
    <location>
        <position position="1"/>
    </location>
</feature>
<feature type="chain" id="PRO_0000067484" description="Annexin A4">
    <location>
        <begin position="2"/>
        <end position="319"/>
    </location>
</feature>
<feature type="repeat" description="Annexin 1" evidence="4">
    <location>
        <begin position="14"/>
        <end position="85"/>
    </location>
</feature>
<feature type="repeat" description="Annexin 2" evidence="4">
    <location>
        <begin position="86"/>
        <end position="157"/>
    </location>
</feature>
<feature type="repeat" description="Annexin 3" evidence="4">
    <location>
        <begin position="169"/>
        <end position="241"/>
    </location>
</feature>
<feature type="repeat" description="Annexin 4" evidence="4">
    <location>
        <begin position="245"/>
        <end position="316"/>
    </location>
</feature>
<feature type="modified residue" description="N-acetylalanine" evidence="5">
    <location>
        <position position="2"/>
    </location>
</feature>
<feature type="modified residue" description="Phosphothreonine; by PKC" evidence="5">
    <location>
        <position position="7"/>
    </location>
</feature>
<feature type="modified residue" description="Phosphoserine" evidence="2">
    <location>
        <position position="12"/>
    </location>
</feature>
<feature type="modified residue" description="N6-acetyllysine" evidence="2">
    <location>
        <position position="213"/>
    </location>
</feature>
<feature type="modified residue" description="N6-acetyllysine" evidence="2">
    <location>
        <position position="293"/>
    </location>
</feature>
<feature type="modified residue" description="N6-acetyllysine" evidence="2">
    <location>
        <position position="300"/>
    </location>
</feature>
<organism>
    <name type="scientific">Sus scrofa</name>
    <name type="common">Pig</name>
    <dbReference type="NCBI Taxonomy" id="9823"/>
    <lineage>
        <taxon>Eukaryota</taxon>
        <taxon>Metazoa</taxon>
        <taxon>Chordata</taxon>
        <taxon>Craniata</taxon>
        <taxon>Vertebrata</taxon>
        <taxon>Euteleostomi</taxon>
        <taxon>Mammalia</taxon>
        <taxon>Eutheria</taxon>
        <taxon>Laurasiatheria</taxon>
        <taxon>Artiodactyla</taxon>
        <taxon>Suina</taxon>
        <taxon>Suidae</taxon>
        <taxon>Sus</taxon>
    </lineage>
</organism>
<comment type="function">
    <text evidence="1">Calcium/phospholipid-binding protein which promotes membrane fusion and is involved in exocytosis.</text>
</comment>
<comment type="subunit">
    <text>Monomer.</text>
</comment>
<comment type="subcellular location">
    <subcellularLocation>
        <location evidence="3">Zymogen granule membrane</location>
        <topology evidence="3">Peripheral membrane protein</topology>
    </subcellularLocation>
</comment>
<comment type="domain">
    <text>A pair of annexin repeats may form one binding site for calcium and phospholipid.</text>
</comment>
<comment type="miscellaneous">
    <text>Seems to bind one calcium ion with high affinity.</text>
</comment>
<comment type="similarity">
    <text evidence="4 6">Belongs to the annexin family.</text>
</comment>
<proteinExistence type="evidence at protein level"/>
<protein>
    <recommendedName>
        <fullName>Annexin A4</fullName>
    </recommendedName>
    <alternativeName>
        <fullName>35-beta calcimedin</fullName>
    </alternativeName>
    <alternativeName>
        <fullName>Annexin IV</fullName>
    </alternativeName>
    <alternativeName>
        <fullName>Annexin-4</fullName>
    </alternativeName>
    <alternativeName>
        <fullName>Chromobindin-4</fullName>
    </alternativeName>
    <alternativeName>
        <fullName>Endonexin I</fullName>
    </alternativeName>
    <alternativeName>
        <fullName>Lipocortin IV</fullName>
    </alternativeName>
    <alternativeName>
        <fullName>P32.5</fullName>
    </alternativeName>
    <alternativeName>
        <fullName>PP4-X</fullName>
    </alternativeName>
    <alternativeName>
        <fullName>Placental anticoagulant protein II</fullName>
        <shortName>PAP-II</shortName>
    </alternativeName>
    <alternativeName>
        <fullName>Protein II</fullName>
    </alternativeName>
</protein>
<gene>
    <name type="primary">ANXA4</name>
    <name type="synonym">ANX4</name>
</gene>
<evidence type="ECO:0000250" key="1"/>
<evidence type="ECO:0000250" key="2">
    <source>
        <dbReference type="UniProtKB" id="P09525"/>
    </source>
</evidence>
<evidence type="ECO:0000250" key="3">
    <source>
        <dbReference type="UniProtKB" id="P50994"/>
    </source>
</evidence>
<evidence type="ECO:0000255" key="4">
    <source>
        <dbReference type="PROSITE-ProRule" id="PRU01245"/>
    </source>
</evidence>
<evidence type="ECO:0000269" key="5">
    <source>
    </source>
</evidence>
<evidence type="ECO:0000305" key="6"/>
<dbReference type="EMBL" id="F14682">
    <property type="protein sequence ID" value="CAA23194.1"/>
    <property type="molecule type" value="mRNA"/>
</dbReference>
<dbReference type="PIR" id="A27107">
    <property type="entry name" value="LUPG4"/>
</dbReference>
<dbReference type="RefSeq" id="NP_001161111.1">
    <property type="nucleotide sequence ID" value="NM_001167639.1"/>
</dbReference>
<dbReference type="SMR" id="P08132"/>
<dbReference type="FunCoup" id="P08132">
    <property type="interactions" value="661"/>
</dbReference>
<dbReference type="STRING" id="9823.ENSSSCP00000008898"/>
<dbReference type="iPTMnet" id="P08132"/>
<dbReference type="PaxDb" id="9823-ENSSSCP00000008898"/>
<dbReference type="PeptideAtlas" id="P08132"/>
<dbReference type="Ensembl" id="ENSSSCT00015070189.1">
    <property type="protein sequence ID" value="ENSSSCP00015028063.1"/>
    <property type="gene ID" value="ENSSSCG00015052361.1"/>
</dbReference>
<dbReference type="Ensembl" id="ENSSSCT00025064494.1">
    <property type="protein sequence ID" value="ENSSSCP00025027468.1"/>
    <property type="gene ID" value="ENSSSCG00025047392.1"/>
</dbReference>
<dbReference type="Ensembl" id="ENSSSCT00040091914.1">
    <property type="protein sequence ID" value="ENSSSCP00040040556.1"/>
    <property type="gene ID" value="ENSSSCG00040067180.1"/>
</dbReference>
<dbReference type="Ensembl" id="ENSSSCT00050045379.1">
    <property type="protein sequence ID" value="ENSSSCP00050018645.1"/>
    <property type="gene ID" value="ENSSSCG00050033836.1"/>
</dbReference>
<dbReference type="Ensembl" id="ENSSSCT00055038315.1">
    <property type="protein sequence ID" value="ENSSSCP00055030441.1"/>
    <property type="gene ID" value="ENSSSCG00055019474.1"/>
</dbReference>
<dbReference type="Ensembl" id="ENSSSCT00055038482.1">
    <property type="protein sequence ID" value="ENSSSCP00055030574.1"/>
    <property type="gene ID" value="ENSSSCG00055019474.1"/>
</dbReference>
<dbReference type="Ensembl" id="ENSSSCT00065042016.1">
    <property type="protein sequence ID" value="ENSSSCP00065017812.1"/>
    <property type="gene ID" value="ENSSSCG00065031077.1"/>
</dbReference>
<dbReference type="Ensembl" id="ENSSSCT00065042020.1">
    <property type="protein sequence ID" value="ENSSSCP00065017813.1"/>
    <property type="gene ID" value="ENSSSCG00065031077.1"/>
</dbReference>
<dbReference type="Ensembl" id="ENSSSCT00065042027.1">
    <property type="protein sequence ID" value="ENSSSCP00065017816.1"/>
    <property type="gene ID" value="ENSSSCG00065031077.1"/>
</dbReference>
<dbReference type="Ensembl" id="ENSSSCT00065042031.1">
    <property type="protein sequence ID" value="ENSSSCP00065017817.1"/>
    <property type="gene ID" value="ENSSSCG00065031077.1"/>
</dbReference>
<dbReference type="Ensembl" id="ENSSSCT00065042040.1">
    <property type="protein sequence ID" value="ENSSSCP00065017821.1"/>
    <property type="gene ID" value="ENSSSCG00065031077.1"/>
</dbReference>
<dbReference type="Ensembl" id="ENSSSCT00065042049.1">
    <property type="protein sequence ID" value="ENSSSCP00065017826.1"/>
    <property type="gene ID" value="ENSSSCG00065031077.1"/>
</dbReference>
<dbReference type="Ensembl" id="ENSSSCT00070059960.1">
    <property type="protein sequence ID" value="ENSSSCP00070051085.1"/>
    <property type="gene ID" value="ENSSSCG00070029818.1"/>
</dbReference>
<dbReference type="Ensembl" id="ENSSSCT00070059961.1">
    <property type="protein sequence ID" value="ENSSSCP00070051086.1"/>
    <property type="gene ID" value="ENSSSCG00070029818.1"/>
</dbReference>
<dbReference type="Ensembl" id="ENSSSCT00070059962.1">
    <property type="protein sequence ID" value="ENSSSCP00070051087.1"/>
    <property type="gene ID" value="ENSSSCG00070029818.1"/>
</dbReference>
<dbReference type="GeneID" id="100312960"/>
<dbReference type="KEGG" id="ssc:100312960"/>
<dbReference type="CTD" id="307"/>
<dbReference type="eggNOG" id="KOG0819">
    <property type="taxonomic scope" value="Eukaryota"/>
</dbReference>
<dbReference type="InParanoid" id="P08132"/>
<dbReference type="OrthoDB" id="37886at2759"/>
<dbReference type="Proteomes" id="UP000008227">
    <property type="component" value="Unplaced"/>
</dbReference>
<dbReference type="Proteomes" id="UP000314985">
    <property type="component" value="Chromosome 3"/>
</dbReference>
<dbReference type="Proteomes" id="UP000694570">
    <property type="component" value="Unplaced"/>
</dbReference>
<dbReference type="Proteomes" id="UP000694571">
    <property type="component" value="Unplaced"/>
</dbReference>
<dbReference type="Proteomes" id="UP000694720">
    <property type="component" value="Unplaced"/>
</dbReference>
<dbReference type="Proteomes" id="UP000694722">
    <property type="component" value="Unplaced"/>
</dbReference>
<dbReference type="Proteomes" id="UP000694723">
    <property type="component" value="Unplaced"/>
</dbReference>
<dbReference type="Proteomes" id="UP000694724">
    <property type="component" value="Unplaced"/>
</dbReference>
<dbReference type="Proteomes" id="UP000694725">
    <property type="component" value="Unplaced"/>
</dbReference>
<dbReference type="Proteomes" id="UP000694726">
    <property type="component" value="Unplaced"/>
</dbReference>
<dbReference type="Proteomes" id="UP000694727">
    <property type="component" value="Unplaced"/>
</dbReference>
<dbReference type="Proteomes" id="UP000694728">
    <property type="component" value="Unplaced"/>
</dbReference>
<dbReference type="GO" id="GO:0005737">
    <property type="term" value="C:cytoplasm"/>
    <property type="evidence" value="ECO:0000318"/>
    <property type="project" value="GO_Central"/>
</dbReference>
<dbReference type="GO" id="GO:0005634">
    <property type="term" value="C:nucleus"/>
    <property type="evidence" value="ECO:0000318"/>
    <property type="project" value="GO_Central"/>
</dbReference>
<dbReference type="GO" id="GO:0005886">
    <property type="term" value="C:plasma membrane"/>
    <property type="evidence" value="ECO:0000318"/>
    <property type="project" value="GO_Central"/>
</dbReference>
<dbReference type="GO" id="GO:0012506">
    <property type="term" value="C:vesicle membrane"/>
    <property type="evidence" value="ECO:0000318"/>
    <property type="project" value="GO_Central"/>
</dbReference>
<dbReference type="GO" id="GO:0042589">
    <property type="term" value="C:zymogen granule membrane"/>
    <property type="evidence" value="ECO:0007669"/>
    <property type="project" value="UniProtKB-SubCell"/>
</dbReference>
<dbReference type="GO" id="GO:0005509">
    <property type="term" value="F:calcium ion binding"/>
    <property type="evidence" value="ECO:0007669"/>
    <property type="project" value="InterPro"/>
</dbReference>
<dbReference type="GO" id="GO:0005544">
    <property type="term" value="F:calcium-dependent phospholipid binding"/>
    <property type="evidence" value="ECO:0000318"/>
    <property type="project" value="GO_Central"/>
</dbReference>
<dbReference type="GO" id="GO:0001786">
    <property type="term" value="F:phosphatidylserine binding"/>
    <property type="evidence" value="ECO:0000318"/>
    <property type="project" value="GO_Central"/>
</dbReference>
<dbReference type="FunFam" id="1.10.220.10:FF:000002">
    <property type="entry name" value="Annexin"/>
    <property type="match status" value="1"/>
</dbReference>
<dbReference type="FunFam" id="1.10.220.10:FF:000003">
    <property type="entry name" value="Annexin"/>
    <property type="match status" value="1"/>
</dbReference>
<dbReference type="FunFam" id="1.10.220.10:FF:000004">
    <property type="entry name" value="Annexin"/>
    <property type="match status" value="1"/>
</dbReference>
<dbReference type="FunFam" id="1.10.220.10:FF:000022">
    <property type="entry name" value="Annexin A5"/>
    <property type="match status" value="1"/>
</dbReference>
<dbReference type="Gene3D" id="1.10.220.10">
    <property type="entry name" value="Annexin"/>
    <property type="match status" value="4"/>
</dbReference>
<dbReference type="InterPro" id="IPR001464">
    <property type="entry name" value="Annexin"/>
</dbReference>
<dbReference type="InterPro" id="IPR018502">
    <property type="entry name" value="Annexin_repeat"/>
</dbReference>
<dbReference type="InterPro" id="IPR018252">
    <property type="entry name" value="Annexin_repeat_CS"/>
</dbReference>
<dbReference type="InterPro" id="IPR037104">
    <property type="entry name" value="Annexin_sf"/>
</dbReference>
<dbReference type="InterPro" id="IPR002391">
    <property type="entry name" value="ANX4"/>
</dbReference>
<dbReference type="PANTHER" id="PTHR10502">
    <property type="entry name" value="ANNEXIN"/>
    <property type="match status" value="1"/>
</dbReference>
<dbReference type="PANTHER" id="PTHR10502:SF28">
    <property type="entry name" value="ANNEXIN A4"/>
    <property type="match status" value="1"/>
</dbReference>
<dbReference type="Pfam" id="PF00191">
    <property type="entry name" value="Annexin"/>
    <property type="match status" value="4"/>
</dbReference>
<dbReference type="PRINTS" id="PR00196">
    <property type="entry name" value="ANNEXIN"/>
</dbReference>
<dbReference type="PRINTS" id="PR00200">
    <property type="entry name" value="ANNEXINIV"/>
</dbReference>
<dbReference type="SMART" id="SM00335">
    <property type="entry name" value="ANX"/>
    <property type="match status" value="4"/>
</dbReference>
<dbReference type="SUPFAM" id="SSF47874">
    <property type="entry name" value="Annexin"/>
    <property type="match status" value="1"/>
</dbReference>
<dbReference type="PROSITE" id="PS00223">
    <property type="entry name" value="ANNEXIN_1"/>
    <property type="match status" value="4"/>
</dbReference>
<dbReference type="PROSITE" id="PS51897">
    <property type="entry name" value="ANNEXIN_2"/>
    <property type="match status" value="4"/>
</dbReference>
<sequence length="319" mass="35829">MAAKGGTVKAASGFNAAEDAQTLRKAMKGLGTDEDAIISVLAYRSTAQRQEIRTAYKSTIGRDLLDDLKSELSGNFEQVILGMMTPTVLYDVQELRRAMKGAGTDEGCLIEILASRTPEEIRRINQTYQLQYGRSLEDDIRSDTSFMFQRVLVSLSAGGRDEGNYLDDALVRQDAQDLYEAGEKKWGTDEVKFLTVLCSRNRNHLLHVFDEYKRISQKDIEQSIKSETSGSFEDALLAIVKCMRNKSAYFAERLYKSMKGLGTDDNTLIRVMVSRAEIDMMDIRANFKRLYGKSLYSFIKGDTSGDYRKVLLILCGGDD</sequence>
<reference key="1">
    <citation type="journal article" date="1987" name="EMBO J.">
        <title>The amino acid sequence of protein II and its phosphorylation site for protein kinase C; the domain structure Ca2+-modulated lipid binding proteins.</title>
        <authorList>
            <person name="Weber K."/>
            <person name="Johnsson N."/>
            <person name="Plessmann U."/>
            <person name="Van P.N."/>
            <person name="Soling H.-D."/>
            <person name="Ampe C."/>
            <person name="Vandekerckhove J."/>
        </authorList>
    </citation>
    <scope>PROTEIN SEQUENCE OF 2-319</scope>
    <scope>ACETYLATION AT ALA-2</scope>
    <scope>PHOSPHORYLATION AT THR-7</scope>
    <source>
        <tissue>Intestinal epithelium</tissue>
    </source>
</reference>
<reference key="2">
    <citation type="journal article" date="1996" name="Mamm. Genome">
        <title>Evaluation and characterization of a porcine small intestine cDNA library: analysis of 839 clones.</title>
        <authorList>
            <person name="Winteroe A.K."/>
            <person name="Fredholm M."/>
            <person name="Davies W."/>
        </authorList>
    </citation>
    <scope>NUCLEOTIDE SEQUENCE [LARGE SCALE MRNA] OF 1-127</scope>
    <source>
        <tissue>Small intestine</tissue>
    </source>
</reference>
<keyword id="KW-0007">Acetylation</keyword>
<keyword id="KW-0041">Annexin</keyword>
<keyword id="KW-0106">Calcium</keyword>
<keyword id="KW-0111">Calcium/phospholipid-binding</keyword>
<keyword id="KW-0968">Cytoplasmic vesicle</keyword>
<keyword id="KW-0903">Direct protein sequencing</keyword>
<keyword id="KW-0472">Membrane</keyword>
<keyword id="KW-0597">Phosphoprotein</keyword>
<keyword id="KW-1185">Reference proteome</keyword>
<keyword id="KW-0677">Repeat</keyword>